<accession>O35655</accession>
<accession>A2AIC6</accession>
<comment type="function">
    <text>May have a role in the recovery or adaptation response of photoreceptors. May have a role in diverse sensory neurons and in development.</text>
</comment>
<comment type="catalytic activity">
    <reaction>
        <text>O-phospho-L-seryl-[protein] + H2O = L-seryl-[protein] + phosphate</text>
        <dbReference type="Rhea" id="RHEA:20629"/>
        <dbReference type="Rhea" id="RHEA-COMP:9863"/>
        <dbReference type="Rhea" id="RHEA-COMP:11604"/>
        <dbReference type="ChEBI" id="CHEBI:15377"/>
        <dbReference type="ChEBI" id="CHEBI:29999"/>
        <dbReference type="ChEBI" id="CHEBI:43474"/>
        <dbReference type="ChEBI" id="CHEBI:83421"/>
        <dbReference type="EC" id="3.1.3.16"/>
    </reaction>
</comment>
<comment type="catalytic activity">
    <reaction>
        <text>O-phospho-L-threonyl-[protein] + H2O = L-threonyl-[protein] + phosphate</text>
        <dbReference type="Rhea" id="RHEA:47004"/>
        <dbReference type="Rhea" id="RHEA-COMP:11060"/>
        <dbReference type="Rhea" id="RHEA-COMP:11605"/>
        <dbReference type="ChEBI" id="CHEBI:15377"/>
        <dbReference type="ChEBI" id="CHEBI:30013"/>
        <dbReference type="ChEBI" id="CHEBI:43474"/>
        <dbReference type="ChEBI" id="CHEBI:61977"/>
        <dbReference type="EC" id="3.1.3.16"/>
    </reaction>
</comment>
<comment type="cofactor">
    <cofactor evidence="1">
        <name>Mn(2+)</name>
        <dbReference type="ChEBI" id="CHEBI:29035"/>
    </cofactor>
    <text evidence="1">Binds 2 manganese ions per subunit.</text>
</comment>
<comment type="cofactor">
    <cofactor evidence="1">
        <name>Mg(2+)</name>
        <dbReference type="ChEBI" id="CHEBI:18420"/>
    </cofactor>
</comment>
<comment type="activity regulation">
    <text evidence="1">Activated by calcium.</text>
</comment>
<comment type="tissue specificity">
    <text>In the embryo it is almost exclusively expressed in the peripheral nervous system, within sensory neurons of cranial and dorsal root ganglia. Otherwise found in fetal inner ear and a small group of neurons in the midbrain/pons junction.</text>
</comment>
<comment type="developmental stage">
    <text>Up-regulated at 12.3 dpc in dorsal root ganglia (DRG) and in some sensory cranial ganglia. A slightly decreased expression could still be detected in sensory ganglia at 16.5 dpc. It is not known if expression in sensory neurons persists in adult life.</text>
</comment>
<comment type="similarity">
    <text evidence="4">Belongs to the PPP phosphatase family.</text>
</comment>
<sequence length="650" mass="75058">MGCGTSSKKGNKSKKVIKAALVIQNWYRRYRARLRVRQHYALAIFQSIEYSDEQGQMQLSSFFSFMLENYTKTNNEDSALVTRIFDNTRRESQIKDRDDFLGLIEVPDSYDGPRLQFPLTFTDIHILLQAFKQQQILHAHYVLEVLFEARKVLKQMPNFSHVKTFPAKEITICGDLHGKLDDLMLIFYKNGLPSENNPYVFNGDFVDRGNNSMEILMILLVCFLVYPSDLHLNRGNHEDFMMNLRYGFTKEILQKYKLHGRKILQVLEEVYTWLPIGTIIDNEILVIHGGISESTDLNTLHQLQRNKMKSVLMPPVLGNQETGEKRNKSASNYVEPRKVEPDKTPSEDLTKQEWEQIVDILWSDPRGKKGCYPNTSRGGGCYFGPDVTSKVLSKNQLKMLIRSHECKPDGYEVSHDGKVITVFSASNYYEEGSNRGAYIRLSYGTMPQFFQYQVTSTSCLNPLHQRMNAMESSAFKILKEKMISRKTDLINAFELRDHSRSGRISLAEWAFSMENILGLNLPWRSLSSHLVTIDSSGSVDYMSSFDDIRIEKPTKDMKSNLTETMYRYRSDLKIIFNIIDSDQSGLISMDEFRTMWKLFNAHYKAHIDDSQIDELASIVDFNKDGNIDFNEFLKAFYVVHKYDKPGTSLA</sequence>
<dbReference type="EC" id="3.1.3.16"/>
<dbReference type="EMBL" id="AL732450">
    <property type="status" value="NOT_ANNOTATED_CDS"/>
    <property type="molecule type" value="Genomic_DNA"/>
</dbReference>
<dbReference type="EMBL" id="AL974311">
    <property type="status" value="NOT_ANNOTATED_CDS"/>
    <property type="molecule type" value="Genomic_DNA"/>
</dbReference>
<dbReference type="EMBL" id="Y08234">
    <property type="protein sequence ID" value="CAA69403.1"/>
    <property type="molecule type" value="Genomic_DNA"/>
</dbReference>
<dbReference type="CCDS" id="CCDS41200.1"/>
<dbReference type="RefSeq" id="NP_035277.1">
    <property type="nucleotide sequence ID" value="NM_011147.1"/>
</dbReference>
<dbReference type="SMR" id="O35655"/>
<dbReference type="FunCoup" id="O35655">
    <property type="interactions" value="393"/>
</dbReference>
<dbReference type="STRING" id="10090.ENSMUSP00000071191"/>
<dbReference type="iPTMnet" id="O35655"/>
<dbReference type="PhosphoSitePlus" id="O35655"/>
<dbReference type="SwissPalm" id="O35655"/>
<dbReference type="PaxDb" id="10090-ENSMUSP00000071191"/>
<dbReference type="ProteomicsDB" id="291781"/>
<dbReference type="Antibodypedia" id="24151">
    <property type="antibodies" value="164 antibodies from 23 providers"/>
</dbReference>
<dbReference type="DNASU" id="237178"/>
<dbReference type="Ensembl" id="ENSMUST00000071204.12">
    <property type="protein sequence ID" value="ENSMUSP00000071191.6"/>
    <property type="gene ID" value="ENSMUSG00000062168.13"/>
</dbReference>
<dbReference type="GeneID" id="237178"/>
<dbReference type="KEGG" id="mmu:237178"/>
<dbReference type="UCSC" id="uc009uto.2">
    <property type="organism name" value="mouse"/>
</dbReference>
<dbReference type="AGR" id="MGI:1097157"/>
<dbReference type="CTD" id="5475"/>
<dbReference type="MGI" id="MGI:1097157">
    <property type="gene designation" value="Ppef1"/>
</dbReference>
<dbReference type="VEuPathDB" id="HostDB:ENSMUSG00000062168"/>
<dbReference type="eggNOG" id="KOG0377">
    <property type="taxonomic scope" value="Eukaryota"/>
</dbReference>
<dbReference type="GeneTree" id="ENSGT00940000159830"/>
<dbReference type="HOGENOM" id="CLU_012603_1_0_1"/>
<dbReference type="InParanoid" id="O35655"/>
<dbReference type="OMA" id="SHDNEIN"/>
<dbReference type="OrthoDB" id="442428at2759"/>
<dbReference type="PhylomeDB" id="O35655"/>
<dbReference type="TreeFam" id="TF313342"/>
<dbReference type="Reactome" id="R-MMU-2514859">
    <property type="pathway name" value="Inactivation, recovery and regulation of the phototransduction cascade"/>
</dbReference>
<dbReference type="BioGRID-ORCS" id="237178">
    <property type="hits" value="0 hits in 79 CRISPR screens"/>
</dbReference>
<dbReference type="ChiTaRS" id="Ppef1">
    <property type="organism name" value="mouse"/>
</dbReference>
<dbReference type="PRO" id="PR:O35655"/>
<dbReference type="Proteomes" id="UP000000589">
    <property type="component" value="Chromosome X"/>
</dbReference>
<dbReference type="RNAct" id="O35655">
    <property type="molecule type" value="protein"/>
</dbReference>
<dbReference type="Bgee" id="ENSMUSG00000062168">
    <property type="expression patterns" value="Expressed in spermatid and 43 other cell types or tissues"/>
</dbReference>
<dbReference type="ExpressionAtlas" id="O35655">
    <property type="expression patterns" value="baseline and differential"/>
</dbReference>
<dbReference type="GO" id="GO:0005509">
    <property type="term" value="F:calcium ion binding"/>
    <property type="evidence" value="ECO:0007669"/>
    <property type="project" value="InterPro"/>
</dbReference>
<dbReference type="GO" id="GO:0005506">
    <property type="term" value="F:iron ion binding"/>
    <property type="evidence" value="ECO:0007669"/>
    <property type="project" value="InterPro"/>
</dbReference>
<dbReference type="GO" id="GO:0030145">
    <property type="term" value="F:manganese ion binding"/>
    <property type="evidence" value="ECO:0007669"/>
    <property type="project" value="InterPro"/>
</dbReference>
<dbReference type="GO" id="GO:0004722">
    <property type="term" value="F:protein serine/threonine phosphatase activity"/>
    <property type="evidence" value="ECO:0000250"/>
    <property type="project" value="MGI"/>
</dbReference>
<dbReference type="GO" id="GO:0050906">
    <property type="term" value="P:detection of stimulus involved in sensory perception"/>
    <property type="evidence" value="ECO:0007669"/>
    <property type="project" value="InterPro"/>
</dbReference>
<dbReference type="CDD" id="cd00051">
    <property type="entry name" value="EFh"/>
    <property type="match status" value="1"/>
</dbReference>
<dbReference type="CDD" id="cd07420">
    <property type="entry name" value="MPP_RdgC"/>
    <property type="match status" value="1"/>
</dbReference>
<dbReference type="FunFam" id="1.10.238.10:FF:000164">
    <property type="entry name" value="Serine/threonine-protein phosphatase with EF-hands"/>
    <property type="match status" value="1"/>
</dbReference>
<dbReference type="Gene3D" id="3.60.21.10">
    <property type="match status" value="1"/>
</dbReference>
<dbReference type="Gene3D" id="1.10.238.10">
    <property type="entry name" value="EF-hand"/>
    <property type="match status" value="1"/>
</dbReference>
<dbReference type="InterPro" id="IPR004843">
    <property type="entry name" value="Calcineurin-like_PHP_ApaH"/>
</dbReference>
<dbReference type="InterPro" id="IPR011992">
    <property type="entry name" value="EF-hand-dom_pair"/>
</dbReference>
<dbReference type="InterPro" id="IPR018247">
    <property type="entry name" value="EF_Hand_1_Ca_BS"/>
</dbReference>
<dbReference type="InterPro" id="IPR002048">
    <property type="entry name" value="EF_hand_dom"/>
</dbReference>
<dbReference type="InterPro" id="IPR000048">
    <property type="entry name" value="IQ_motif_EF-hand-BS"/>
</dbReference>
<dbReference type="InterPro" id="IPR029052">
    <property type="entry name" value="Metallo-depent_PP-like"/>
</dbReference>
<dbReference type="InterPro" id="IPR013235">
    <property type="entry name" value="PPP_dom"/>
</dbReference>
<dbReference type="InterPro" id="IPR051134">
    <property type="entry name" value="PPP_phosphatase"/>
</dbReference>
<dbReference type="InterPro" id="IPR012008">
    <property type="entry name" value="Ser/Thr-Pase_EF-hand_contain"/>
</dbReference>
<dbReference type="InterPro" id="IPR006186">
    <property type="entry name" value="Ser/Thr-sp_prot-phosphatase"/>
</dbReference>
<dbReference type="PANTHER" id="PTHR45668">
    <property type="entry name" value="SERINE/THREONINE-PROTEIN PHOSPHATASE 5-RELATED"/>
    <property type="match status" value="1"/>
</dbReference>
<dbReference type="PANTHER" id="PTHR45668:SF1">
    <property type="entry name" value="SERINE_THREONINE-PROTEIN PHOSPHATASE WITH EF-HANDS 1"/>
    <property type="match status" value="1"/>
</dbReference>
<dbReference type="Pfam" id="PF13499">
    <property type="entry name" value="EF-hand_7"/>
    <property type="match status" value="1"/>
</dbReference>
<dbReference type="Pfam" id="PF00149">
    <property type="entry name" value="Metallophos"/>
    <property type="match status" value="1"/>
</dbReference>
<dbReference type="Pfam" id="PF08321">
    <property type="entry name" value="PPP5"/>
    <property type="match status" value="1"/>
</dbReference>
<dbReference type="PIRSF" id="PIRSF000912">
    <property type="entry name" value="PPEF"/>
    <property type="match status" value="1"/>
</dbReference>
<dbReference type="PRINTS" id="PR00114">
    <property type="entry name" value="STPHPHTASE"/>
</dbReference>
<dbReference type="SMART" id="SM00054">
    <property type="entry name" value="EFh"/>
    <property type="match status" value="3"/>
</dbReference>
<dbReference type="SMART" id="SM00015">
    <property type="entry name" value="IQ"/>
    <property type="match status" value="1"/>
</dbReference>
<dbReference type="SMART" id="SM00156">
    <property type="entry name" value="PP2Ac"/>
    <property type="match status" value="1"/>
</dbReference>
<dbReference type="SUPFAM" id="SSF47473">
    <property type="entry name" value="EF-hand"/>
    <property type="match status" value="1"/>
</dbReference>
<dbReference type="SUPFAM" id="SSF56300">
    <property type="entry name" value="Metallo-dependent phosphatases"/>
    <property type="match status" value="1"/>
</dbReference>
<dbReference type="PROSITE" id="PS00018">
    <property type="entry name" value="EF_HAND_1"/>
    <property type="match status" value="3"/>
</dbReference>
<dbReference type="PROSITE" id="PS50222">
    <property type="entry name" value="EF_HAND_2"/>
    <property type="match status" value="3"/>
</dbReference>
<dbReference type="PROSITE" id="PS00125">
    <property type="entry name" value="SER_THR_PHOSPHATASE"/>
    <property type="match status" value="1"/>
</dbReference>
<gene>
    <name type="primary">Ppef1</name>
    <name type="synonym">Dres10</name>
    <name type="synonym">Ppef</name>
</gene>
<proteinExistence type="evidence at transcript level"/>
<evidence type="ECO:0000250" key="1"/>
<evidence type="ECO:0000255" key="2">
    <source>
        <dbReference type="PROSITE-ProRule" id="PRU00448"/>
    </source>
</evidence>
<evidence type="ECO:0000256" key="3">
    <source>
        <dbReference type="SAM" id="MobiDB-lite"/>
    </source>
</evidence>
<evidence type="ECO:0000305" key="4"/>
<feature type="chain" id="PRO_0000058900" description="Serine/threonine-protein phosphatase with EF-hands 1">
    <location>
        <begin position="1"/>
        <end position="650"/>
    </location>
</feature>
<feature type="domain" description="IQ">
    <location>
        <begin position="16"/>
        <end position="45"/>
    </location>
</feature>
<feature type="domain" description="EF-hand 1" evidence="2">
    <location>
        <begin position="484"/>
        <end position="519"/>
    </location>
</feature>
<feature type="domain" description="EF-hand 2" evidence="2">
    <location>
        <begin position="567"/>
        <end position="602"/>
    </location>
</feature>
<feature type="domain" description="EF-hand 3" evidence="2">
    <location>
        <begin position="607"/>
        <end position="642"/>
    </location>
</feature>
<feature type="region of interest" description="Catalytic" evidence="1">
    <location>
        <begin position="124"/>
        <end position="456"/>
    </location>
</feature>
<feature type="region of interest" description="Disordered" evidence="3">
    <location>
        <begin position="315"/>
        <end position="348"/>
    </location>
</feature>
<feature type="compositionally biased region" description="Basic and acidic residues" evidence="3">
    <location>
        <begin position="335"/>
        <end position="348"/>
    </location>
</feature>
<feature type="active site" description="Proton donor" evidence="1">
    <location>
        <position position="237"/>
    </location>
</feature>
<feature type="binding site" evidence="1">
    <location>
        <position position="175"/>
    </location>
    <ligand>
        <name>Mn(2+)</name>
        <dbReference type="ChEBI" id="CHEBI:29035"/>
        <label>1</label>
    </ligand>
</feature>
<feature type="binding site" evidence="1">
    <location>
        <position position="177"/>
    </location>
    <ligand>
        <name>Mn(2+)</name>
        <dbReference type="ChEBI" id="CHEBI:29035"/>
        <label>1</label>
    </ligand>
</feature>
<feature type="binding site" evidence="1">
    <location>
        <position position="204"/>
    </location>
    <ligand>
        <name>Mn(2+)</name>
        <dbReference type="ChEBI" id="CHEBI:29035"/>
        <label>1</label>
    </ligand>
</feature>
<feature type="binding site" evidence="1">
    <location>
        <position position="204"/>
    </location>
    <ligand>
        <name>Mn(2+)</name>
        <dbReference type="ChEBI" id="CHEBI:29035"/>
        <label>2</label>
    </ligand>
</feature>
<feature type="binding site" evidence="1">
    <location>
        <position position="236"/>
    </location>
    <ligand>
        <name>Mn(2+)</name>
        <dbReference type="ChEBI" id="CHEBI:29035"/>
        <label>2</label>
    </ligand>
</feature>
<feature type="binding site" evidence="1">
    <location>
        <position position="288"/>
    </location>
    <ligand>
        <name>Mn(2+)</name>
        <dbReference type="ChEBI" id="CHEBI:29035"/>
        <label>2</label>
    </ligand>
</feature>
<feature type="binding site" evidence="1">
    <location>
        <position position="404"/>
    </location>
    <ligand>
        <name>Mn(2+)</name>
        <dbReference type="ChEBI" id="CHEBI:29035"/>
        <label>2</label>
    </ligand>
</feature>
<feature type="binding site" evidence="2">
    <location>
        <position position="497"/>
    </location>
    <ligand>
        <name>Ca(2+)</name>
        <dbReference type="ChEBI" id="CHEBI:29108"/>
        <label>1</label>
    </ligand>
</feature>
<feature type="binding site" evidence="2">
    <location>
        <position position="499"/>
    </location>
    <ligand>
        <name>Ca(2+)</name>
        <dbReference type="ChEBI" id="CHEBI:29108"/>
        <label>1</label>
    </ligand>
</feature>
<feature type="binding site" evidence="2">
    <location>
        <position position="501"/>
    </location>
    <ligand>
        <name>Ca(2+)</name>
        <dbReference type="ChEBI" id="CHEBI:29108"/>
        <label>1</label>
    </ligand>
</feature>
<feature type="binding site" evidence="2">
    <location>
        <position position="503"/>
    </location>
    <ligand>
        <name>Ca(2+)</name>
        <dbReference type="ChEBI" id="CHEBI:29108"/>
        <label>1</label>
    </ligand>
</feature>
<feature type="binding site" evidence="2">
    <location>
        <position position="508"/>
    </location>
    <ligand>
        <name>Ca(2+)</name>
        <dbReference type="ChEBI" id="CHEBI:29108"/>
        <label>1</label>
    </ligand>
</feature>
<feature type="binding site" evidence="2">
    <location>
        <position position="580"/>
    </location>
    <ligand>
        <name>Ca(2+)</name>
        <dbReference type="ChEBI" id="CHEBI:29108"/>
        <label>2</label>
    </ligand>
</feature>
<feature type="binding site" evidence="2">
    <location>
        <position position="582"/>
    </location>
    <ligand>
        <name>Ca(2+)</name>
        <dbReference type="ChEBI" id="CHEBI:29108"/>
        <label>2</label>
    </ligand>
</feature>
<feature type="binding site" evidence="2">
    <location>
        <position position="584"/>
    </location>
    <ligand>
        <name>Ca(2+)</name>
        <dbReference type="ChEBI" id="CHEBI:29108"/>
        <label>2</label>
    </ligand>
</feature>
<feature type="binding site" evidence="2">
    <location>
        <position position="591"/>
    </location>
    <ligand>
        <name>Ca(2+)</name>
        <dbReference type="ChEBI" id="CHEBI:29108"/>
        <label>2</label>
    </ligand>
</feature>
<feature type="binding site" evidence="2">
    <location>
        <position position="620"/>
    </location>
    <ligand>
        <name>Ca(2+)</name>
        <dbReference type="ChEBI" id="CHEBI:29108"/>
        <label>3</label>
    </ligand>
</feature>
<feature type="binding site" evidence="2">
    <location>
        <position position="622"/>
    </location>
    <ligand>
        <name>Ca(2+)</name>
        <dbReference type="ChEBI" id="CHEBI:29108"/>
        <label>3</label>
    </ligand>
</feature>
<feature type="binding site" evidence="2">
    <location>
        <position position="624"/>
    </location>
    <ligand>
        <name>Ca(2+)</name>
        <dbReference type="ChEBI" id="CHEBI:29108"/>
        <label>3</label>
    </ligand>
</feature>
<feature type="binding site" evidence="2">
    <location>
        <position position="626"/>
    </location>
    <ligand>
        <name>Ca(2+)</name>
        <dbReference type="ChEBI" id="CHEBI:29108"/>
        <label>3</label>
    </ligand>
</feature>
<feature type="binding site" evidence="2">
    <location>
        <position position="631"/>
    </location>
    <ligand>
        <name>Ca(2+)</name>
        <dbReference type="ChEBI" id="CHEBI:29108"/>
        <label>3</label>
    </ligand>
</feature>
<name>PPE1_MOUSE</name>
<keyword id="KW-0106">Calcium</keyword>
<keyword id="KW-0378">Hydrolase</keyword>
<keyword id="KW-0460">Magnesium</keyword>
<keyword id="KW-0464">Manganese</keyword>
<keyword id="KW-0479">Metal-binding</keyword>
<keyword id="KW-0904">Protein phosphatase</keyword>
<keyword id="KW-1185">Reference proteome</keyword>
<keyword id="KW-0677">Repeat</keyword>
<protein>
    <recommendedName>
        <fullName>Serine/threonine-protein phosphatase with EF-hands 1</fullName>
        <shortName>PPEF-1</shortName>
        <ecNumber>3.1.3.16</ecNumber>
    </recommendedName>
    <alternativeName>
        <fullName>DRES10</fullName>
    </alternativeName>
    <alternativeName>
        <fullName>Protein phosphatase with EF calcium-binding domain</fullName>
        <shortName>PPEF</shortName>
    </alternativeName>
</protein>
<organism>
    <name type="scientific">Mus musculus</name>
    <name type="common">Mouse</name>
    <dbReference type="NCBI Taxonomy" id="10090"/>
    <lineage>
        <taxon>Eukaryota</taxon>
        <taxon>Metazoa</taxon>
        <taxon>Chordata</taxon>
        <taxon>Craniata</taxon>
        <taxon>Vertebrata</taxon>
        <taxon>Euteleostomi</taxon>
        <taxon>Mammalia</taxon>
        <taxon>Eutheria</taxon>
        <taxon>Euarchontoglires</taxon>
        <taxon>Glires</taxon>
        <taxon>Rodentia</taxon>
        <taxon>Myomorpha</taxon>
        <taxon>Muroidea</taxon>
        <taxon>Muridae</taxon>
        <taxon>Murinae</taxon>
        <taxon>Mus</taxon>
        <taxon>Mus</taxon>
    </lineage>
</organism>
<reference key="1">
    <citation type="journal article" date="2009" name="PLoS Biol.">
        <title>Lineage-specific biology revealed by a finished genome assembly of the mouse.</title>
        <authorList>
            <person name="Church D.M."/>
            <person name="Goodstadt L."/>
            <person name="Hillier L.W."/>
            <person name="Zody M.C."/>
            <person name="Goldstein S."/>
            <person name="She X."/>
            <person name="Bult C.J."/>
            <person name="Agarwala R."/>
            <person name="Cherry J.L."/>
            <person name="DiCuccio M."/>
            <person name="Hlavina W."/>
            <person name="Kapustin Y."/>
            <person name="Meric P."/>
            <person name="Maglott D."/>
            <person name="Birtle Z."/>
            <person name="Marques A.C."/>
            <person name="Graves T."/>
            <person name="Zhou S."/>
            <person name="Teague B."/>
            <person name="Potamousis K."/>
            <person name="Churas C."/>
            <person name="Place M."/>
            <person name="Herschleb J."/>
            <person name="Runnheim R."/>
            <person name="Forrest D."/>
            <person name="Amos-Landgraf J."/>
            <person name="Schwartz D.C."/>
            <person name="Cheng Z."/>
            <person name="Lindblad-Toh K."/>
            <person name="Eichler E.E."/>
            <person name="Ponting C.P."/>
        </authorList>
    </citation>
    <scope>NUCLEOTIDE SEQUENCE [LARGE SCALE GENOMIC DNA]</scope>
    <source>
        <strain>C57BL/6J</strain>
    </source>
</reference>
<reference key="2">
    <citation type="journal article" date="1997" name="Hum. Mol. Genet.">
        <title>A novel human serine-threonine phosphatase related to the Drosophila retinal degeneration C (rdgC) gene is selectively expressed in sensory neurons of neural crest origin.</title>
        <authorList>
            <person name="Montini E."/>
            <person name="Rugarli E.I."/>
            <person name="van de Vosse E."/>
            <person name="Andolfi G."/>
            <person name="Mariani M."/>
            <person name="Puca A.A."/>
            <person name="Consales G.G."/>
            <person name="den Dunnen J.T."/>
            <person name="Ballabio A."/>
            <person name="Franco B."/>
        </authorList>
    </citation>
    <scope>NUCLEOTIDE SEQUENCE [GENOMIC DNA] OF 16-253</scope>
</reference>